<accession>Q045B8</accession>
<name>RPIA_LACGA</name>
<feature type="chain" id="PRO_1000016941" description="Ribose-5-phosphate isomerase A">
    <location>
        <begin position="1"/>
        <end position="232"/>
    </location>
</feature>
<feature type="active site" description="Proton acceptor" evidence="1">
    <location>
        <position position="110"/>
    </location>
</feature>
<feature type="binding site" evidence="1">
    <location>
        <begin position="31"/>
        <end position="34"/>
    </location>
    <ligand>
        <name>substrate</name>
    </ligand>
</feature>
<feature type="binding site" evidence="1">
    <location>
        <begin position="88"/>
        <end position="91"/>
    </location>
    <ligand>
        <name>substrate</name>
    </ligand>
</feature>
<feature type="binding site" evidence="1">
    <location>
        <begin position="101"/>
        <end position="104"/>
    </location>
    <ligand>
        <name>substrate</name>
    </ligand>
</feature>
<feature type="binding site" evidence="1">
    <location>
        <position position="128"/>
    </location>
    <ligand>
        <name>substrate</name>
    </ligand>
</feature>
<comment type="function">
    <text evidence="1">Catalyzes the reversible conversion of ribose-5-phosphate to ribulose 5-phosphate.</text>
</comment>
<comment type="catalytic activity">
    <reaction evidence="1">
        <text>aldehydo-D-ribose 5-phosphate = D-ribulose 5-phosphate</text>
        <dbReference type="Rhea" id="RHEA:14657"/>
        <dbReference type="ChEBI" id="CHEBI:58121"/>
        <dbReference type="ChEBI" id="CHEBI:58273"/>
        <dbReference type="EC" id="5.3.1.6"/>
    </reaction>
</comment>
<comment type="pathway">
    <text evidence="1">Carbohydrate degradation; pentose phosphate pathway; D-ribose 5-phosphate from D-ribulose 5-phosphate (non-oxidative stage): step 1/1.</text>
</comment>
<comment type="subunit">
    <text evidence="1">Homodimer.</text>
</comment>
<comment type="similarity">
    <text evidence="1">Belongs to the ribose 5-phosphate isomerase family.</text>
</comment>
<organism>
    <name type="scientific">Lactobacillus gasseri (strain ATCC 33323 / DSM 20243 / BCRC 14619 / CIP 102991 / JCM 1131 / KCTC 3163 / NCIMB 11718 / NCTC 13722 / AM63)</name>
    <dbReference type="NCBI Taxonomy" id="324831"/>
    <lineage>
        <taxon>Bacteria</taxon>
        <taxon>Bacillati</taxon>
        <taxon>Bacillota</taxon>
        <taxon>Bacilli</taxon>
        <taxon>Lactobacillales</taxon>
        <taxon>Lactobacillaceae</taxon>
        <taxon>Lactobacillus</taxon>
    </lineage>
</organism>
<protein>
    <recommendedName>
        <fullName evidence="1">Ribose-5-phosphate isomerase A</fullName>
        <ecNumber evidence="1">5.3.1.6</ecNumber>
    </recommendedName>
    <alternativeName>
        <fullName evidence="1">Phosphoriboisomerase A</fullName>
        <shortName evidence="1">PRI</shortName>
    </alternativeName>
</protein>
<proteinExistence type="inferred from homology"/>
<gene>
    <name evidence="1" type="primary">rpiA</name>
    <name type="ordered locus">LGAS_0557</name>
</gene>
<evidence type="ECO:0000255" key="1">
    <source>
        <dbReference type="HAMAP-Rule" id="MF_00170"/>
    </source>
</evidence>
<keyword id="KW-0413">Isomerase</keyword>
<sequence length="232" mass="25485">MDKSEQDQLKKEAATKAAMMVESGSVLGVGTGSTVAFFIDALGERKEKENFSLKHIVTTSNRSKKQLEGLGFQVDELADIDQADLTVDGADRVDDNLDGIKGGGGALTLEKNVAINSKKVIWIVDESKLVHHLSGFPLPVEVLPVSAEQNFKRFEEEGLKPQWRLDDNGKRYVTHYGNYIIDLAADPTPVPHGLADYLDHTVGVVEHGLFLDMCDEVIIAHSDGTIEDKKRK</sequence>
<dbReference type="EC" id="5.3.1.6" evidence="1"/>
<dbReference type="EMBL" id="CP000413">
    <property type="protein sequence ID" value="ABJ59954.1"/>
    <property type="molecule type" value="Genomic_DNA"/>
</dbReference>
<dbReference type="RefSeq" id="WP_003647601.1">
    <property type="nucleotide sequence ID" value="NZ_WBMG01000004.1"/>
</dbReference>
<dbReference type="SMR" id="Q045B8"/>
<dbReference type="GeneID" id="29639075"/>
<dbReference type="KEGG" id="lga:LGAS_0557"/>
<dbReference type="HOGENOM" id="CLU_056590_1_0_9"/>
<dbReference type="BioCyc" id="LGAS324831:G1G6Y-557-MONOMER"/>
<dbReference type="UniPathway" id="UPA00115">
    <property type="reaction ID" value="UER00412"/>
</dbReference>
<dbReference type="Proteomes" id="UP000000664">
    <property type="component" value="Chromosome"/>
</dbReference>
<dbReference type="GO" id="GO:0004751">
    <property type="term" value="F:ribose-5-phosphate isomerase activity"/>
    <property type="evidence" value="ECO:0007669"/>
    <property type="project" value="UniProtKB-UniRule"/>
</dbReference>
<dbReference type="GO" id="GO:0009052">
    <property type="term" value="P:pentose-phosphate shunt, non-oxidative branch"/>
    <property type="evidence" value="ECO:0007669"/>
    <property type="project" value="UniProtKB-UniRule"/>
</dbReference>
<dbReference type="CDD" id="cd01398">
    <property type="entry name" value="RPI_A"/>
    <property type="match status" value="1"/>
</dbReference>
<dbReference type="FunFam" id="3.40.50.1360:FF:000001">
    <property type="entry name" value="Ribose-5-phosphate isomerase A"/>
    <property type="match status" value="1"/>
</dbReference>
<dbReference type="Gene3D" id="3.30.70.260">
    <property type="match status" value="1"/>
</dbReference>
<dbReference type="Gene3D" id="3.40.50.1360">
    <property type="match status" value="1"/>
</dbReference>
<dbReference type="HAMAP" id="MF_00170">
    <property type="entry name" value="Rib_5P_isom_A"/>
    <property type="match status" value="1"/>
</dbReference>
<dbReference type="InterPro" id="IPR037171">
    <property type="entry name" value="NagB/RpiA_transferase-like"/>
</dbReference>
<dbReference type="InterPro" id="IPR050262">
    <property type="entry name" value="Ribose-5P_isomerase"/>
</dbReference>
<dbReference type="InterPro" id="IPR020672">
    <property type="entry name" value="Ribose5P_isomerase_typA_subgr"/>
</dbReference>
<dbReference type="InterPro" id="IPR004788">
    <property type="entry name" value="Ribose5P_isomerase_type_A"/>
</dbReference>
<dbReference type="NCBIfam" id="NF001924">
    <property type="entry name" value="PRK00702.1"/>
    <property type="match status" value="1"/>
</dbReference>
<dbReference type="NCBIfam" id="TIGR00021">
    <property type="entry name" value="rpiA"/>
    <property type="match status" value="1"/>
</dbReference>
<dbReference type="PANTHER" id="PTHR43748">
    <property type="entry name" value="RIBOSE-5-PHOSPHATE ISOMERASE 3, CHLOROPLASTIC-RELATED"/>
    <property type="match status" value="1"/>
</dbReference>
<dbReference type="PANTHER" id="PTHR43748:SF3">
    <property type="entry name" value="RIBOSE-5-PHOSPHATE ISOMERASE 3, CHLOROPLASTIC-RELATED"/>
    <property type="match status" value="1"/>
</dbReference>
<dbReference type="Pfam" id="PF06026">
    <property type="entry name" value="Rib_5-P_isom_A"/>
    <property type="match status" value="1"/>
</dbReference>
<dbReference type="SUPFAM" id="SSF75445">
    <property type="entry name" value="D-ribose-5-phosphate isomerase (RpiA), lid domain"/>
    <property type="match status" value="1"/>
</dbReference>
<dbReference type="SUPFAM" id="SSF100950">
    <property type="entry name" value="NagB/RpiA/CoA transferase-like"/>
    <property type="match status" value="1"/>
</dbReference>
<reference key="1">
    <citation type="journal article" date="2006" name="Proc. Natl. Acad. Sci. U.S.A.">
        <title>Comparative genomics of the lactic acid bacteria.</title>
        <authorList>
            <person name="Makarova K.S."/>
            <person name="Slesarev A."/>
            <person name="Wolf Y.I."/>
            <person name="Sorokin A."/>
            <person name="Mirkin B."/>
            <person name="Koonin E.V."/>
            <person name="Pavlov A."/>
            <person name="Pavlova N."/>
            <person name="Karamychev V."/>
            <person name="Polouchine N."/>
            <person name="Shakhova V."/>
            <person name="Grigoriev I."/>
            <person name="Lou Y."/>
            <person name="Rohksar D."/>
            <person name="Lucas S."/>
            <person name="Huang K."/>
            <person name="Goodstein D.M."/>
            <person name="Hawkins T."/>
            <person name="Plengvidhya V."/>
            <person name="Welker D."/>
            <person name="Hughes J."/>
            <person name="Goh Y."/>
            <person name="Benson A."/>
            <person name="Baldwin K."/>
            <person name="Lee J.-H."/>
            <person name="Diaz-Muniz I."/>
            <person name="Dosti B."/>
            <person name="Smeianov V."/>
            <person name="Wechter W."/>
            <person name="Barabote R."/>
            <person name="Lorca G."/>
            <person name="Altermann E."/>
            <person name="Barrangou R."/>
            <person name="Ganesan B."/>
            <person name="Xie Y."/>
            <person name="Rawsthorne H."/>
            <person name="Tamir D."/>
            <person name="Parker C."/>
            <person name="Breidt F."/>
            <person name="Broadbent J.R."/>
            <person name="Hutkins R."/>
            <person name="O'Sullivan D."/>
            <person name="Steele J."/>
            <person name="Unlu G."/>
            <person name="Saier M.H. Jr."/>
            <person name="Klaenhammer T."/>
            <person name="Richardson P."/>
            <person name="Kozyavkin S."/>
            <person name="Weimer B.C."/>
            <person name="Mills D.A."/>
        </authorList>
    </citation>
    <scope>NUCLEOTIDE SEQUENCE [LARGE SCALE GENOMIC DNA]</scope>
    <source>
        <strain>ATCC 33323 / DSM 20243 / BCRC 14619 / CIP 102991 / JCM 1131 / KCTC 3163 / NCIMB 11718 / NCTC 13722 / AM63</strain>
    </source>
</reference>